<sequence>MAQLYFYYSAMNAGKSTALLQSSYNYQERGMRTVVYTAEIDDRFGAGKVSSRIGLSSPAKLFNQNSSLFDEIRAEHEQQAIHCVLVDECQFLTRQQVYELSEVVDQLDIPVLCYGLRTDFRGELFIGSQYLLAWSDKLVELKTICFCGRKASMVLRLDQAGRPYNEGEQVVIGGNERYVSVCRKHYKEALQVGSLTAIQERHRHD</sequence>
<protein>
    <recommendedName>
        <fullName evidence="2">Thymidine kinase</fullName>
        <ecNumber evidence="2">2.7.1.21</ecNumber>
    </recommendedName>
</protein>
<accession>P0A3M0</accession>
<accession>Q9S5G7</accession>
<feature type="chain" id="PRO_0000175016" description="Thymidine kinase">
    <location>
        <begin position="1"/>
        <end position="205"/>
    </location>
</feature>
<feature type="active site" description="Proton acceptor" evidence="2">
    <location>
        <position position="88"/>
    </location>
</feature>
<feature type="binding site" evidence="2">
    <location>
        <begin position="9"/>
        <end position="16"/>
    </location>
    <ligand>
        <name>ATP</name>
        <dbReference type="ChEBI" id="CHEBI:30616"/>
    </ligand>
</feature>
<feature type="binding site" evidence="2">
    <location>
        <begin position="87"/>
        <end position="90"/>
    </location>
    <ligand>
        <name>ATP</name>
        <dbReference type="ChEBI" id="CHEBI:30616"/>
    </ligand>
</feature>
<feature type="binding site" evidence="2">
    <location>
        <position position="145"/>
    </location>
    <ligand>
        <name>Zn(2+)</name>
        <dbReference type="ChEBI" id="CHEBI:29105"/>
    </ligand>
</feature>
<feature type="binding site" evidence="2">
    <location>
        <position position="147"/>
    </location>
    <ligand>
        <name>Zn(2+)</name>
        <dbReference type="ChEBI" id="CHEBI:29105"/>
    </ligand>
</feature>
<feature type="binding site" evidence="2">
    <location>
        <position position="182"/>
    </location>
    <ligand>
        <name>Zn(2+)</name>
        <dbReference type="ChEBI" id="CHEBI:29105"/>
    </ligand>
</feature>
<feature type="binding site" evidence="2">
    <location>
        <position position="185"/>
    </location>
    <ligand>
        <name>Zn(2+)</name>
        <dbReference type="ChEBI" id="CHEBI:29105"/>
    </ligand>
</feature>
<gene>
    <name evidence="2" type="primary">tdk</name>
    <name type="ordered locus">SF1238</name>
    <name type="ordered locus">S1324</name>
</gene>
<name>KITH_SHIFL</name>
<reference key="1">
    <citation type="journal article" date="2002" name="Nucleic Acids Res.">
        <title>Genome sequence of Shigella flexneri 2a: insights into pathogenicity through comparison with genomes of Escherichia coli K12 and O157.</title>
        <authorList>
            <person name="Jin Q."/>
            <person name="Yuan Z."/>
            <person name="Xu J."/>
            <person name="Wang Y."/>
            <person name="Shen Y."/>
            <person name="Lu W."/>
            <person name="Wang J."/>
            <person name="Liu H."/>
            <person name="Yang J."/>
            <person name="Yang F."/>
            <person name="Zhang X."/>
            <person name="Zhang J."/>
            <person name="Yang G."/>
            <person name="Wu H."/>
            <person name="Qu D."/>
            <person name="Dong J."/>
            <person name="Sun L."/>
            <person name="Xue Y."/>
            <person name="Zhao A."/>
            <person name="Gao Y."/>
            <person name="Zhu J."/>
            <person name="Kan B."/>
            <person name="Ding K."/>
            <person name="Chen S."/>
            <person name="Cheng H."/>
            <person name="Yao Z."/>
            <person name="He B."/>
            <person name="Chen R."/>
            <person name="Ma D."/>
            <person name="Qiang B."/>
            <person name="Wen Y."/>
            <person name="Hou Y."/>
            <person name="Yu J."/>
        </authorList>
    </citation>
    <scope>NUCLEOTIDE SEQUENCE [LARGE SCALE GENOMIC DNA]</scope>
    <source>
        <strain>301 / Serotype 2a</strain>
    </source>
</reference>
<reference key="2">
    <citation type="journal article" date="2003" name="Infect. Immun.">
        <title>Complete genome sequence and comparative genomics of Shigella flexneri serotype 2a strain 2457T.</title>
        <authorList>
            <person name="Wei J."/>
            <person name="Goldberg M.B."/>
            <person name="Burland V."/>
            <person name="Venkatesan M.M."/>
            <person name="Deng W."/>
            <person name="Fournier G."/>
            <person name="Mayhew G.F."/>
            <person name="Plunkett G. III"/>
            <person name="Rose D.J."/>
            <person name="Darling A."/>
            <person name="Mau B."/>
            <person name="Perna N.T."/>
            <person name="Payne S.M."/>
            <person name="Runyen-Janecky L.J."/>
            <person name="Zhou S."/>
            <person name="Schwartz D.C."/>
            <person name="Blattner F.R."/>
        </authorList>
    </citation>
    <scope>NUCLEOTIDE SEQUENCE [LARGE SCALE GENOMIC DNA]</scope>
    <source>
        <strain>ATCC 700930 / 2457T / Serotype 2a</strain>
    </source>
</reference>
<proteinExistence type="inferred from homology"/>
<keyword id="KW-0021">Allosteric enzyme</keyword>
<keyword id="KW-0067">ATP-binding</keyword>
<keyword id="KW-0963">Cytoplasm</keyword>
<keyword id="KW-0237">DNA synthesis</keyword>
<keyword id="KW-0418">Kinase</keyword>
<keyword id="KW-0479">Metal-binding</keyword>
<keyword id="KW-0547">Nucleotide-binding</keyword>
<keyword id="KW-1185">Reference proteome</keyword>
<keyword id="KW-0808">Transferase</keyword>
<keyword id="KW-0862">Zinc</keyword>
<organism>
    <name type="scientific">Shigella flexneri</name>
    <dbReference type="NCBI Taxonomy" id="623"/>
    <lineage>
        <taxon>Bacteria</taxon>
        <taxon>Pseudomonadati</taxon>
        <taxon>Pseudomonadota</taxon>
        <taxon>Gammaproteobacteria</taxon>
        <taxon>Enterobacterales</taxon>
        <taxon>Enterobacteriaceae</taxon>
        <taxon>Shigella</taxon>
    </lineage>
</organism>
<evidence type="ECO:0000250" key="1"/>
<evidence type="ECO:0000255" key="2">
    <source>
        <dbReference type="HAMAP-Rule" id="MF_00124"/>
    </source>
</evidence>
<comment type="function">
    <text evidence="1">Phosphorylates both thymidine and deoxyuridine.</text>
</comment>
<comment type="catalytic activity">
    <reaction evidence="2">
        <text>thymidine + ATP = dTMP + ADP + H(+)</text>
        <dbReference type="Rhea" id="RHEA:19129"/>
        <dbReference type="ChEBI" id="CHEBI:15378"/>
        <dbReference type="ChEBI" id="CHEBI:17748"/>
        <dbReference type="ChEBI" id="CHEBI:30616"/>
        <dbReference type="ChEBI" id="CHEBI:63528"/>
        <dbReference type="ChEBI" id="CHEBI:456216"/>
        <dbReference type="EC" id="2.7.1.21"/>
    </reaction>
</comment>
<comment type="activity regulation">
    <text evidence="1">Allosteric enzyme which is feedback inhibited by dTTP and activated by a number of dNDP and dNTP.</text>
</comment>
<comment type="subunit">
    <text evidence="2">Homotetramer.</text>
</comment>
<comment type="subcellular location">
    <subcellularLocation>
        <location evidence="2">Cytoplasm</location>
    </subcellularLocation>
</comment>
<comment type="similarity">
    <text evidence="2">Belongs to the thymidine kinase family.</text>
</comment>
<dbReference type="EC" id="2.7.1.21" evidence="2"/>
<dbReference type="EMBL" id="AE005674">
    <property type="protein sequence ID" value="AAN42851.1"/>
    <property type="molecule type" value="Genomic_DNA"/>
</dbReference>
<dbReference type="EMBL" id="AE014073">
    <property type="protein sequence ID" value="AAP16736.1"/>
    <property type="molecule type" value="Genomic_DNA"/>
</dbReference>
<dbReference type="RefSeq" id="NP_707144.1">
    <property type="nucleotide sequence ID" value="NC_004337.2"/>
</dbReference>
<dbReference type="RefSeq" id="WP_000068079.1">
    <property type="nucleotide sequence ID" value="NZ_WPGW01000029.1"/>
</dbReference>
<dbReference type="SMR" id="P0A3M0"/>
<dbReference type="STRING" id="198214.SF1238"/>
<dbReference type="PaxDb" id="198214-SF1238"/>
<dbReference type="GeneID" id="1024199"/>
<dbReference type="GeneID" id="93775304"/>
<dbReference type="KEGG" id="sfl:SF1238"/>
<dbReference type="KEGG" id="sfx:S1324"/>
<dbReference type="PATRIC" id="fig|198214.7.peg.1456"/>
<dbReference type="HOGENOM" id="CLU_064400_2_1_6"/>
<dbReference type="Proteomes" id="UP000001006">
    <property type="component" value="Chromosome"/>
</dbReference>
<dbReference type="Proteomes" id="UP000002673">
    <property type="component" value="Chromosome"/>
</dbReference>
<dbReference type="GO" id="GO:0005829">
    <property type="term" value="C:cytosol"/>
    <property type="evidence" value="ECO:0007669"/>
    <property type="project" value="TreeGrafter"/>
</dbReference>
<dbReference type="GO" id="GO:0005524">
    <property type="term" value="F:ATP binding"/>
    <property type="evidence" value="ECO:0007669"/>
    <property type="project" value="UniProtKB-UniRule"/>
</dbReference>
<dbReference type="GO" id="GO:0004797">
    <property type="term" value="F:thymidine kinase activity"/>
    <property type="evidence" value="ECO:0007669"/>
    <property type="project" value="UniProtKB-UniRule"/>
</dbReference>
<dbReference type="GO" id="GO:0008270">
    <property type="term" value="F:zinc ion binding"/>
    <property type="evidence" value="ECO:0007669"/>
    <property type="project" value="UniProtKB-UniRule"/>
</dbReference>
<dbReference type="GO" id="GO:0071897">
    <property type="term" value="P:DNA biosynthetic process"/>
    <property type="evidence" value="ECO:0007669"/>
    <property type="project" value="UniProtKB-KW"/>
</dbReference>
<dbReference type="GO" id="GO:0046104">
    <property type="term" value="P:thymidine metabolic process"/>
    <property type="evidence" value="ECO:0007669"/>
    <property type="project" value="TreeGrafter"/>
</dbReference>
<dbReference type="FunFam" id="3.30.60.20:FF:000017">
    <property type="entry name" value="Thymidine kinase"/>
    <property type="match status" value="1"/>
</dbReference>
<dbReference type="FunFam" id="3.40.50.300:FF:000323">
    <property type="entry name" value="Thymidine kinase"/>
    <property type="match status" value="1"/>
</dbReference>
<dbReference type="Gene3D" id="3.30.60.20">
    <property type="match status" value="1"/>
</dbReference>
<dbReference type="Gene3D" id="3.40.50.300">
    <property type="entry name" value="P-loop containing nucleotide triphosphate hydrolases"/>
    <property type="match status" value="1"/>
</dbReference>
<dbReference type="HAMAP" id="MF_00124">
    <property type="entry name" value="Thymidine_kinase"/>
    <property type="match status" value="1"/>
</dbReference>
<dbReference type="InterPro" id="IPR027417">
    <property type="entry name" value="P-loop_NTPase"/>
</dbReference>
<dbReference type="InterPro" id="IPR001267">
    <property type="entry name" value="Thymidine_kinase"/>
</dbReference>
<dbReference type="InterPro" id="IPR020633">
    <property type="entry name" value="Thymidine_kinase_CS"/>
</dbReference>
<dbReference type="NCBIfam" id="NF003298">
    <property type="entry name" value="PRK04296.1-3"/>
    <property type="match status" value="1"/>
</dbReference>
<dbReference type="NCBIfam" id="NF003300">
    <property type="entry name" value="PRK04296.1-5"/>
    <property type="match status" value="1"/>
</dbReference>
<dbReference type="PANTHER" id="PTHR11441">
    <property type="entry name" value="THYMIDINE KINASE"/>
    <property type="match status" value="1"/>
</dbReference>
<dbReference type="PANTHER" id="PTHR11441:SF0">
    <property type="entry name" value="THYMIDINE KINASE, CYTOSOLIC"/>
    <property type="match status" value="1"/>
</dbReference>
<dbReference type="Pfam" id="PF00265">
    <property type="entry name" value="TK"/>
    <property type="match status" value="1"/>
</dbReference>
<dbReference type="PIRSF" id="PIRSF035805">
    <property type="entry name" value="TK_cell"/>
    <property type="match status" value="1"/>
</dbReference>
<dbReference type="SUPFAM" id="SSF57716">
    <property type="entry name" value="Glucocorticoid receptor-like (DNA-binding domain)"/>
    <property type="match status" value="1"/>
</dbReference>
<dbReference type="SUPFAM" id="SSF52540">
    <property type="entry name" value="P-loop containing nucleoside triphosphate hydrolases"/>
    <property type="match status" value="1"/>
</dbReference>
<dbReference type="PROSITE" id="PS00603">
    <property type="entry name" value="TK_CELLULAR_TYPE"/>
    <property type="match status" value="1"/>
</dbReference>